<gene>
    <name type="primary">P2rx1</name>
</gene>
<sequence>MARRLQDELSAFFFEYDTPRMVLVRNKKVGVIFRLIQLVVLVYVIGWVFVYEKGYQTSSDLISSVSVKLKGLAVTQLQGLGPQVWDVADYVFPAHGDSSFVVMTNFIVTPQQTQGHCAENPEGGICQDDSGCTPGKAERKAQGIRTGNCVPFNGTVKTCEIFGWCPVEVDDKIPSPALLREAENFTLFIKNSISFPRFKVNRRNLVEEVNGTYMKKCLYHKIQHPLCPVFNLGYVVRESGQDFRSLAEKGGVVGITIDWKCDLDWHVRHCKPIYQFHGLYGEKNLSPGFNFRFARHFVQNGTNRRHLFKVFGIHFDILVDGKAGKFDIIPTMTTIGSGIGIFGVATVLCDLLLLHILPKRHYYKQKKFKYAEDMGPGEGEHDPVATSSTLGLQENMRTS</sequence>
<evidence type="ECO:0000250" key="1">
    <source>
        <dbReference type="UniProtKB" id="F8W463"/>
    </source>
</evidence>
<evidence type="ECO:0000250" key="2">
    <source>
        <dbReference type="UniProtKB" id="P51575"/>
    </source>
</evidence>
<evidence type="ECO:0000250" key="3">
    <source>
        <dbReference type="UniProtKB" id="P51576"/>
    </source>
</evidence>
<evidence type="ECO:0000250" key="4">
    <source>
        <dbReference type="UniProtKB" id="P56373"/>
    </source>
</evidence>
<evidence type="ECO:0000255" key="5"/>
<evidence type="ECO:0000256" key="6">
    <source>
        <dbReference type="SAM" id="MobiDB-lite"/>
    </source>
</evidence>
<evidence type="ECO:0000269" key="7">
    <source>
    </source>
</evidence>
<evidence type="ECO:0000269" key="8">
    <source>
    </source>
</evidence>
<evidence type="ECO:0000269" key="9">
    <source>
    </source>
</evidence>
<evidence type="ECO:0000269" key="10">
    <source>
    </source>
</evidence>
<evidence type="ECO:0000269" key="11">
    <source>
    </source>
</evidence>
<evidence type="ECO:0000269" key="12">
    <source>
    </source>
</evidence>
<evidence type="ECO:0000305" key="13"/>
<comment type="function">
    <text evidence="2 3 8 10 11">ATP-gated nonselective transmembrane cation channel permeable to potassium, sodium and with relatively high calcium permeability (PubMed:15686495, PubMed:7523951, PubMed:9606184). Furthermore, CTP functions as a weak affinity agonist for P2RX1 (By similarity). Plays a role a role in urogenital, immune and cardiovascular function (By similarity). Specifically, plays an important role in neurogenic contraction of smooth muscle of the vas deferens, and therefore is essential for normal male reproductive function (By similarity). In addition, contributes to smooth muscle contractions of the urinary bladder (By similarity). On platelets, contributes to platelet activation and aggregation and thereby, also to thrombosis (By similarity). On neutrophils, it is involved in chemotaxis and in mitigating the activation of circulating cells (By similarity).</text>
</comment>
<comment type="catalytic activity">
    <reaction evidence="10">
        <text>Ca(2+)(in) = Ca(2+)(out)</text>
        <dbReference type="Rhea" id="RHEA:29671"/>
        <dbReference type="ChEBI" id="CHEBI:29108"/>
    </reaction>
</comment>
<comment type="catalytic activity">
    <reaction evidence="2">
        <text>K(+)(in) = K(+)(out)</text>
        <dbReference type="Rhea" id="RHEA:29463"/>
        <dbReference type="ChEBI" id="CHEBI:29103"/>
    </reaction>
</comment>
<comment type="catalytic activity">
    <reaction evidence="2">
        <text>Na(+)(in) = Na(+)(out)</text>
        <dbReference type="Rhea" id="RHEA:34963"/>
        <dbReference type="ChEBI" id="CHEBI:29101"/>
    </reaction>
</comment>
<comment type="activity regulation">
    <text evidence="2 10">Activated by low concentrations of ATP (&lt;1 uM) (PubMed:7523951). Undergoes rapid desensitisation. Sensitives to the ATP agonist:alpha/beta-methylene-ATP. Modulated by cholesterol (By similarity).</text>
</comment>
<comment type="subunit">
    <text evidence="7 8 11 12">Functional P2XRs are organized as homomeric and heteromeric trimers. Homotrimer (PubMed:9606184). Forms heterodimer with P2RX2 (PubMed:15313628). Forms heterodimer with P2RX4 (PubMed:15686495). Forms heterodimer with P2RX5 (PubMed:9855626).</text>
</comment>
<comment type="subcellular location">
    <subcellularLocation>
        <location evidence="11">Cell membrane</location>
        <topology evidence="4">Multi-pass membrane protein</topology>
    </subcellularLocation>
    <text evidence="2">Detected at plasma membrane lipid rafts.</text>
</comment>
<comment type="tissue specificity">
    <text evidence="10">High levels in vas deferens and urinary bladder. Lower extent in spinal cord, coeliac ganglion, lung and spleen (probably in the smooth muscle part of both organs).</text>
</comment>
<comment type="developmental stage">
    <text evidence="9">Expressed during apoptosis in thymocytes.</text>
</comment>
<comment type="induction">
    <text>By irradiation and dexamethasone (in thymocytes).</text>
</comment>
<comment type="domain">
    <text evidence="2">The N-terminal 20 to 23 and 27 to 29 residues seem to play a role in the cholesterol-dependent gating of this receptor.</text>
</comment>
<comment type="similarity">
    <text evidence="13">Belongs to the P2X receptor family.</text>
</comment>
<protein>
    <recommendedName>
        <fullName>P2X purinoceptor 1</fullName>
        <shortName>P2X1</shortName>
    </recommendedName>
    <alternativeName>
        <fullName>ATP receptor</fullName>
    </alternativeName>
    <alternativeName>
        <fullName>Purinergic receptor</fullName>
    </alternativeName>
    <alternativeName>
        <fullName>RP-2 protein</fullName>
    </alternativeName>
</protein>
<proteinExistence type="evidence at protein level"/>
<dbReference type="EMBL" id="X80477">
    <property type="protein sequence ID" value="CAA56647.1"/>
    <property type="molecule type" value="mRNA"/>
</dbReference>
<dbReference type="EMBL" id="BC061742">
    <property type="protein sequence ID" value="AAH61742.1"/>
    <property type="molecule type" value="mRNA"/>
</dbReference>
<dbReference type="EMBL" id="M80602">
    <property type="protein sequence ID" value="AAA42065.1"/>
    <property type="molecule type" value="mRNA"/>
</dbReference>
<dbReference type="PIR" id="S50860">
    <property type="entry name" value="S50860"/>
</dbReference>
<dbReference type="RefSeq" id="NP_001135839.1">
    <property type="nucleotide sequence ID" value="NM_001142367.2"/>
</dbReference>
<dbReference type="RefSeq" id="NP_001272344.1">
    <property type="nucleotide sequence ID" value="NM_001285415.1"/>
</dbReference>
<dbReference type="RefSeq" id="NP_037129.1">
    <property type="nucleotide sequence ID" value="NM_012997.3"/>
</dbReference>
<dbReference type="SMR" id="P47824"/>
<dbReference type="FunCoup" id="P47824">
    <property type="interactions" value="32"/>
</dbReference>
<dbReference type="STRING" id="10116.ENSRNOP00000024068"/>
<dbReference type="BindingDB" id="P47824"/>
<dbReference type="ChEMBL" id="CHEMBL2530"/>
<dbReference type="DrugCentral" id="P47824"/>
<dbReference type="GuidetoPHARMACOLOGY" id="478"/>
<dbReference type="TCDB" id="1.A.7.1.1">
    <property type="family name" value="the atp-gated p2x receptor cation channel (p2x receptor) family"/>
</dbReference>
<dbReference type="GlyCosmos" id="P47824">
    <property type="glycosylation" value="4 sites, No reported glycans"/>
</dbReference>
<dbReference type="GlyGen" id="P47824">
    <property type="glycosylation" value="4 sites"/>
</dbReference>
<dbReference type="iPTMnet" id="P47824"/>
<dbReference type="PhosphoSitePlus" id="P47824"/>
<dbReference type="PaxDb" id="10116-ENSRNOP00000024068"/>
<dbReference type="DNASU" id="25505"/>
<dbReference type="Ensembl" id="ENSRNOT00000024068.7">
    <property type="protein sequence ID" value="ENSRNOP00000024068.4"/>
    <property type="gene ID" value="ENSRNOG00000017606.7"/>
</dbReference>
<dbReference type="GeneID" id="25505"/>
<dbReference type="KEGG" id="rno:25505"/>
<dbReference type="AGR" id="RGD:3240"/>
<dbReference type="CTD" id="5023"/>
<dbReference type="RGD" id="3240">
    <property type="gene designation" value="P2rx1"/>
</dbReference>
<dbReference type="eggNOG" id="ENOG502QSUI">
    <property type="taxonomic scope" value="Eukaryota"/>
</dbReference>
<dbReference type="GeneTree" id="ENSGT01020000230351"/>
<dbReference type="HOGENOM" id="CLU_034469_2_0_1"/>
<dbReference type="InParanoid" id="P47824"/>
<dbReference type="OMA" id="DCDLDWS"/>
<dbReference type="OrthoDB" id="494673at2759"/>
<dbReference type="PhylomeDB" id="P47824"/>
<dbReference type="Reactome" id="R-RNO-139853">
    <property type="pathway name" value="Elevation of cytosolic Ca2+ levels"/>
</dbReference>
<dbReference type="Reactome" id="R-RNO-418346">
    <property type="pathway name" value="Platelet homeostasis"/>
</dbReference>
<dbReference type="Reactome" id="R-RNO-6798695">
    <property type="pathway name" value="Neutrophil degranulation"/>
</dbReference>
<dbReference type="PRO" id="PR:P47824"/>
<dbReference type="Proteomes" id="UP000002494">
    <property type="component" value="Chromosome 10"/>
</dbReference>
<dbReference type="Bgee" id="ENSRNOG00000017606">
    <property type="expression patterns" value="Expressed in pancreas and 16 other cell types or tissues"/>
</dbReference>
<dbReference type="ExpressionAtlas" id="P47824">
    <property type="expression patterns" value="baseline and differential"/>
</dbReference>
<dbReference type="GO" id="GO:0009897">
    <property type="term" value="C:external side of plasma membrane"/>
    <property type="evidence" value="ECO:0000266"/>
    <property type="project" value="RGD"/>
</dbReference>
<dbReference type="GO" id="GO:0098978">
    <property type="term" value="C:glutamatergic synapse"/>
    <property type="evidence" value="ECO:0000314"/>
    <property type="project" value="SynGO"/>
</dbReference>
<dbReference type="GO" id="GO:0045121">
    <property type="term" value="C:membrane raft"/>
    <property type="evidence" value="ECO:0000266"/>
    <property type="project" value="RGD"/>
</dbReference>
<dbReference type="GO" id="GO:0005886">
    <property type="term" value="C:plasma membrane"/>
    <property type="evidence" value="ECO:0000266"/>
    <property type="project" value="RGD"/>
</dbReference>
<dbReference type="GO" id="GO:0045211">
    <property type="term" value="C:postsynaptic membrane"/>
    <property type="evidence" value="ECO:0000314"/>
    <property type="project" value="SynGO"/>
</dbReference>
<dbReference type="GO" id="GO:0048787">
    <property type="term" value="C:presynaptic active zone membrane"/>
    <property type="evidence" value="ECO:0000314"/>
    <property type="project" value="SynGO"/>
</dbReference>
<dbReference type="GO" id="GO:0032991">
    <property type="term" value="C:protein-containing complex"/>
    <property type="evidence" value="ECO:0000314"/>
    <property type="project" value="RGD"/>
</dbReference>
<dbReference type="GO" id="GO:0005524">
    <property type="term" value="F:ATP binding"/>
    <property type="evidence" value="ECO:0000314"/>
    <property type="project" value="RGD"/>
</dbReference>
<dbReference type="GO" id="GO:0004931">
    <property type="term" value="F:extracellularly ATP-gated monoatomic cation channel activity"/>
    <property type="evidence" value="ECO:0000314"/>
    <property type="project" value="RGD"/>
</dbReference>
<dbReference type="GO" id="GO:0042802">
    <property type="term" value="F:identical protein binding"/>
    <property type="evidence" value="ECO:0000353"/>
    <property type="project" value="RGD"/>
</dbReference>
<dbReference type="GO" id="GO:0099604">
    <property type="term" value="F:ligand-gated calcium channel activity"/>
    <property type="evidence" value="ECO:0000266"/>
    <property type="project" value="RGD"/>
</dbReference>
<dbReference type="GO" id="GO:0005261">
    <property type="term" value="F:monoatomic cation channel activity"/>
    <property type="evidence" value="ECO:0000266"/>
    <property type="project" value="RGD"/>
</dbReference>
<dbReference type="GO" id="GO:0000166">
    <property type="term" value="F:nucleotide binding"/>
    <property type="evidence" value="ECO:0000353"/>
    <property type="project" value="RGD"/>
</dbReference>
<dbReference type="GO" id="GO:0044877">
    <property type="term" value="F:protein-containing complex binding"/>
    <property type="evidence" value="ECO:0000314"/>
    <property type="project" value="RGD"/>
</dbReference>
<dbReference type="GO" id="GO:0001614">
    <property type="term" value="F:purinergic nucleotide receptor activity"/>
    <property type="evidence" value="ECO:0000266"/>
    <property type="project" value="RGD"/>
</dbReference>
<dbReference type="GO" id="GO:0043924">
    <property type="term" value="F:suramin binding"/>
    <property type="evidence" value="ECO:0000314"/>
    <property type="project" value="RGD"/>
</dbReference>
<dbReference type="GO" id="GO:0006915">
    <property type="term" value="P:apoptotic process"/>
    <property type="evidence" value="ECO:0007669"/>
    <property type="project" value="UniProtKB-KW"/>
</dbReference>
<dbReference type="GO" id="GO:0070588">
    <property type="term" value="P:calcium ion transmembrane transport"/>
    <property type="evidence" value="ECO:0000318"/>
    <property type="project" value="GO_Central"/>
</dbReference>
<dbReference type="GO" id="GO:0046513">
    <property type="term" value="P:ceramide biosynthetic process"/>
    <property type="evidence" value="ECO:0000266"/>
    <property type="project" value="RGD"/>
</dbReference>
<dbReference type="GO" id="GO:0051649">
    <property type="term" value="P:establishment of localization in cell"/>
    <property type="evidence" value="ECO:0000266"/>
    <property type="project" value="RGD"/>
</dbReference>
<dbReference type="GO" id="GO:0007320">
    <property type="term" value="P:insemination"/>
    <property type="evidence" value="ECO:0000266"/>
    <property type="project" value="RGD"/>
</dbReference>
<dbReference type="GO" id="GO:0098655">
    <property type="term" value="P:monoatomic cation transmembrane transport"/>
    <property type="evidence" value="ECO:0000314"/>
    <property type="project" value="RGD"/>
</dbReference>
<dbReference type="GO" id="GO:0034220">
    <property type="term" value="P:monoatomic ion transmembrane transport"/>
    <property type="evidence" value="ECO:0000315"/>
    <property type="project" value="RGD"/>
</dbReference>
<dbReference type="GO" id="GO:0006811">
    <property type="term" value="P:monoatomic ion transport"/>
    <property type="evidence" value="ECO:0000266"/>
    <property type="project" value="RGD"/>
</dbReference>
<dbReference type="GO" id="GO:0019228">
    <property type="term" value="P:neuronal action potential"/>
    <property type="evidence" value="ECO:0000314"/>
    <property type="project" value="RGD"/>
</dbReference>
<dbReference type="GO" id="GO:0030168">
    <property type="term" value="P:platelet activation"/>
    <property type="evidence" value="ECO:0000266"/>
    <property type="project" value="RGD"/>
</dbReference>
<dbReference type="GO" id="GO:1905665">
    <property type="term" value="P:positive regulation of calcium ion import across plasma membrane"/>
    <property type="evidence" value="ECO:0000314"/>
    <property type="project" value="RGD"/>
</dbReference>
<dbReference type="GO" id="GO:0043270">
    <property type="term" value="P:positive regulation of monoatomic ion transport"/>
    <property type="evidence" value="ECO:0000266"/>
    <property type="project" value="RGD"/>
</dbReference>
<dbReference type="GO" id="GO:0008217">
    <property type="term" value="P:regulation of blood pressure"/>
    <property type="evidence" value="ECO:0000315"/>
    <property type="project" value="RGD"/>
</dbReference>
<dbReference type="GO" id="GO:0051924">
    <property type="term" value="P:regulation of calcium ion transport"/>
    <property type="evidence" value="ECO:0000266"/>
    <property type="project" value="RGD"/>
</dbReference>
<dbReference type="GO" id="GO:0099509">
    <property type="term" value="P:regulation of presynaptic cytosolic calcium ion concentration"/>
    <property type="evidence" value="ECO:0000314"/>
    <property type="project" value="SynGO"/>
</dbReference>
<dbReference type="GO" id="GO:0006940">
    <property type="term" value="P:regulation of smooth muscle contraction"/>
    <property type="evidence" value="ECO:0000266"/>
    <property type="project" value="RGD"/>
</dbReference>
<dbReference type="GO" id="GO:2000300">
    <property type="term" value="P:regulation of synaptic vesicle exocytosis"/>
    <property type="evidence" value="ECO:0000314"/>
    <property type="project" value="SynGO"/>
</dbReference>
<dbReference type="GO" id="GO:0003056">
    <property type="term" value="P:regulation of vascular associated smooth muscle contraction"/>
    <property type="evidence" value="ECO:0000266"/>
    <property type="project" value="RGD"/>
</dbReference>
<dbReference type="GO" id="GO:0019229">
    <property type="term" value="P:regulation of vasoconstriction"/>
    <property type="evidence" value="ECO:0000266"/>
    <property type="project" value="RGD"/>
</dbReference>
<dbReference type="GO" id="GO:0033198">
    <property type="term" value="P:response to ATP"/>
    <property type="evidence" value="ECO:0000266"/>
    <property type="project" value="RGD"/>
</dbReference>
<dbReference type="GO" id="GO:0002554">
    <property type="term" value="P:serotonin secretion by platelet"/>
    <property type="evidence" value="ECO:0000266"/>
    <property type="project" value="RGD"/>
</dbReference>
<dbReference type="GO" id="GO:0035249">
    <property type="term" value="P:synaptic transmission, glutamatergic"/>
    <property type="evidence" value="ECO:0000315"/>
    <property type="project" value="RGD"/>
</dbReference>
<dbReference type="FunFam" id="2.60.490.10:FF:000001">
    <property type="entry name" value="P2X purinoceptor"/>
    <property type="match status" value="1"/>
</dbReference>
<dbReference type="Gene3D" id="1.10.287.940">
    <property type="entry name" value="atp-gated p2x4 ion channel"/>
    <property type="match status" value="1"/>
</dbReference>
<dbReference type="Gene3D" id="2.60.490.10">
    <property type="entry name" value="atp-gated p2x4 ion channel domain"/>
    <property type="match status" value="1"/>
</dbReference>
<dbReference type="InterPro" id="IPR003044">
    <property type="entry name" value="P2X1_purnocptor"/>
</dbReference>
<dbReference type="InterPro" id="IPR027309">
    <property type="entry name" value="P2X_extracellular_dom_sf"/>
</dbReference>
<dbReference type="InterPro" id="IPR001429">
    <property type="entry name" value="P2X_purnocptor"/>
</dbReference>
<dbReference type="InterPro" id="IPR053792">
    <property type="entry name" value="P2X_RECEPTOR_CS"/>
</dbReference>
<dbReference type="NCBIfam" id="TIGR00863">
    <property type="entry name" value="P2X"/>
    <property type="match status" value="1"/>
</dbReference>
<dbReference type="PANTHER" id="PTHR10125">
    <property type="entry name" value="P2X PURINOCEPTOR"/>
    <property type="match status" value="1"/>
</dbReference>
<dbReference type="PANTHER" id="PTHR10125:SF9">
    <property type="entry name" value="P2X PURINOCEPTOR 1"/>
    <property type="match status" value="1"/>
</dbReference>
<dbReference type="Pfam" id="PF00864">
    <property type="entry name" value="P2X_receptor"/>
    <property type="match status" value="1"/>
</dbReference>
<dbReference type="PIRSF" id="PIRSF005713">
    <property type="entry name" value="P2X_purinoceptor"/>
    <property type="match status" value="1"/>
</dbReference>
<dbReference type="PRINTS" id="PR01308">
    <property type="entry name" value="P2X1RECEPTOR"/>
</dbReference>
<dbReference type="PRINTS" id="PR01307">
    <property type="entry name" value="P2XRECEPTOR"/>
</dbReference>
<dbReference type="PROSITE" id="PS01212">
    <property type="entry name" value="P2X_RECEPTOR"/>
    <property type="match status" value="1"/>
</dbReference>
<accession>P47824</accession>
<organism>
    <name type="scientific">Rattus norvegicus</name>
    <name type="common">Rat</name>
    <dbReference type="NCBI Taxonomy" id="10116"/>
    <lineage>
        <taxon>Eukaryota</taxon>
        <taxon>Metazoa</taxon>
        <taxon>Chordata</taxon>
        <taxon>Craniata</taxon>
        <taxon>Vertebrata</taxon>
        <taxon>Euteleostomi</taxon>
        <taxon>Mammalia</taxon>
        <taxon>Eutheria</taxon>
        <taxon>Euarchontoglires</taxon>
        <taxon>Glires</taxon>
        <taxon>Rodentia</taxon>
        <taxon>Myomorpha</taxon>
        <taxon>Muroidea</taxon>
        <taxon>Muridae</taxon>
        <taxon>Murinae</taxon>
        <taxon>Rattus</taxon>
    </lineage>
</organism>
<name>P2RX1_RAT</name>
<feature type="chain" id="PRO_0000161547" description="P2X purinoceptor 1">
    <location>
        <begin position="1"/>
        <end position="399"/>
    </location>
</feature>
<feature type="topological domain" description="Cytoplasmic" evidence="4">
    <location>
        <begin position="1"/>
        <end position="28"/>
    </location>
</feature>
<feature type="transmembrane region" description="Helical; Name=1" evidence="5">
    <location>
        <begin position="29"/>
        <end position="50"/>
    </location>
</feature>
<feature type="topological domain" description="Extracellular" evidence="4">
    <location>
        <begin position="51"/>
        <end position="338"/>
    </location>
</feature>
<feature type="transmembrane region" description="Helical; Name=2" evidence="5">
    <location>
        <begin position="339"/>
        <end position="358"/>
    </location>
</feature>
<feature type="topological domain" description="Cytoplasmic" evidence="4">
    <location>
        <begin position="359"/>
        <end position="399"/>
    </location>
</feature>
<feature type="region of interest" description="Pore-forming motif" evidence="5">
    <location>
        <begin position="331"/>
        <end position="338"/>
    </location>
</feature>
<feature type="region of interest" description="Disordered" evidence="6">
    <location>
        <begin position="374"/>
        <end position="399"/>
    </location>
</feature>
<feature type="compositionally biased region" description="Polar residues" evidence="6">
    <location>
        <begin position="385"/>
        <end position="399"/>
    </location>
</feature>
<feature type="binding site" evidence="1">
    <location>
        <position position="68"/>
    </location>
    <ligand>
        <name>CTP</name>
        <dbReference type="ChEBI" id="CHEBI:37563"/>
    </ligand>
</feature>
<feature type="binding site" evidence="4">
    <location>
        <position position="70"/>
    </location>
    <ligand>
        <name>ATP</name>
        <dbReference type="ChEBI" id="CHEBI:30616"/>
    </ligand>
</feature>
<feature type="binding site" evidence="1">
    <location>
        <position position="70"/>
    </location>
    <ligand>
        <name>CTP</name>
        <dbReference type="ChEBI" id="CHEBI:37563"/>
    </ligand>
</feature>
<feature type="binding site" evidence="1">
    <location>
        <position position="140"/>
    </location>
    <ligand>
        <name>CTP</name>
        <dbReference type="ChEBI" id="CHEBI:37563"/>
    </ligand>
</feature>
<feature type="binding site" evidence="4">
    <location>
        <position position="186"/>
    </location>
    <ligand>
        <name>ATP</name>
        <dbReference type="ChEBI" id="CHEBI:30616"/>
    </ligand>
</feature>
<feature type="binding site" evidence="1">
    <location>
        <position position="186"/>
    </location>
    <ligand>
        <name>CTP</name>
        <dbReference type="ChEBI" id="CHEBI:37563"/>
    </ligand>
</feature>
<feature type="binding site" evidence="4">
    <location>
        <position position="286"/>
    </location>
    <ligand>
        <name>ATP</name>
        <dbReference type="ChEBI" id="CHEBI:30616"/>
    </ligand>
</feature>
<feature type="binding site" evidence="4">
    <location>
        <position position="290"/>
    </location>
    <ligand>
        <name>ATP</name>
        <dbReference type="ChEBI" id="CHEBI:30616"/>
    </ligand>
</feature>
<feature type="binding site" evidence="1">
    <location>
        <position position="290"/>
    </location>
    <ligand>
        <name>CTP</name>
        <dbReference type="ChEBI" id="CHEBI:37563"/>
    </ligand>
</feature>
<feature type="binding site" evidence="4">
    <location>
        <position position="292"/>
    </location>
    <ligand>
        <name>ATP</name>
        <dbReference type="ChEBI" id="CHEBI:30616"/>
    </ligand>
</feature>
<feature type="binding site" evidence="1">
    <location>
        <position position="292"/>
    </location>
    <ligand>
        <name>CTP</name>
        <dbReference type="ChEBI" id="CHEBI:37563"/>
    </ligand>
</feature>
<feature type="binding site" evidence="4">
    <location>
        <position position="309"/>
    </location>
    <ligand>
        <name>ATP</name>
        <dbReference type="ChEBI" id="CHEBI:30616"/>
    </ligand>
</feature>
<feature type="binding site" evidence="1">
    <location>
        <position position="309"/>
    </location>
    <ligand>
        <name>CTP</name>
        <dbReference type="ChEBI" id="CHEBI:37563"/>
    </ligand>
</feature>
<feature type="modified residue" description="Phosphoserine" evidence="2">
    <location>
        <position position="387"/>
    </location>
</feature>
<feature type="modified residue" description="Phosphoserine" evidence="2">
    <location>
        <position position="388"/>
    </location>
</feature>
<feature type="modified residue" description="Phosphothreonine" evidence="2">
    <location>
        <position position="389"/>
    </location>
</feature>
<feature type="glycosylation site" description="N-linked (GlcNAc...) asparagine" evidence="5">
    <location>
        <position position="153"/>
    </location>
</feature>
<feature type="glycosylation site" description="N-linked (GlcNAc...) asparagine" evidence="5">
    <location>
        <position position="184"/>
    </location>
</feature>
<feature type="glycosylation site" description="N-linked (GlcNAc...) asparagine" evidence="5">
    <location>
        <position position="210"/>
    </location>
</feature>
<feature type="glycosylation site" description="N-linked (GlcNAc...) asparagine" evidence="5">
    <location>
        <position position="300"/>
    </location>
</feature>
<feature type="disulfide bond" evidence="2">
    <location>
        <begin position="117"/>
        <end position="165"/>
    </location>
</feature>
<feature type="disulfide bond" evidence="2">
    <location>
        <begin position="126"/>
        <end position="149"/>
    </location>
</feature>
<feature type="disulfide bond" evidence="2">
    <location>
        <begin position="132"/>
        <end position="159"/>
    </location>
</feature>
<feature type="disulfide bond" evidence="2">
    <location>
        <begin position="217"/>
        <end position="227"/>
    </location>
</feature>
<feature type="disulfide bond" evidence="2">
    <location>
        <begin position="261"/>
        <end position="270"/>
    </location>
</feature>
<feature type="sequence conflict" description="In Ref. 3; AAA42065." evidence="13" ref="3">
    <original>IKNSISFPRFKVN</original>
    <variation>PQLAHGCYPCPPH</variation>
    <location>
        <begin position="189"/>
        <end position="201"/>
    </location>
</feature>
<reference key="1">
    <citation type="journal article" date="1994" name="Nature">
        <title>A new class of ligand-gated ion channel defined by P2x receptor for extracellular ATP.</title>
        <authorList>
            <person name="Valera S."/>
            <person name="Hussy N."/>
            <person name="Evans R.J."/>
            <person name="Adami N."/>
            <person name="North R.A."/>
            <person name="Surprenant A."/>
            <person name="Buell G.N."/>
        </authorList>
    </citation>
    <scope>NUCLEOTIDE SEQUENCE [MRNA]</scope>
    <scope>FUNCTION</scope>
    <scope>TRANSPORTER ACTIVITY</scope>
    <scope>TISSUE SPECIFICITY</scope>
    <source>
        <tissue>Vas deferens</tissue>
    </source>
</reference>
<reference key="2">
    <citation type="journal article" date="2004" name="Genome Res.">
        <title>The status, quality, and expansion of the NIH full-length cDNA project: the Mammalian Gene Collection (MGC).</title>
        <authorList>
            <consortium name="The MGC Project Team"/>
        </authorList>
    </citation>
    <scope>NUCLEOTIDE SEQUENCE [LARGE SCALE MRNA]</scope>
    <source>
        <tissue>Prostate</tissue>
    </source>
</reference>
<reference key="3">
    <citation type="journal article" date="1991" name="Mol. Cell. Biol.">
        <title>Identification of mRNAs associated with programmed cell death in immature thymocytes.</title>
        <authorList>
            <person name="Owens G.P."/>
            <person name="Hahn W.E."/>
            <person name="Cohen J.J."/>
        </authorList>
    </citation>
    <scope>NUCLEOTIDE SEQUENCE [MRNA] OF 189-399</scope>
    <scope>DEVELOPMENTAL STAGE</scope>
    <source>
        <strain>Sprague-Dawley</strain>
        <tissue>Thymus</tissue>
    </source>
</reference>
<reference key="4">
    <citation type="journal article" date="1998" name="EMBO J.">
        <title>P2X1 and P2X3 receptors form stable trimers: a novel structural motif of ligand-gated ion channels.</title>
        <authorList>
            <person name="Nicke A."/>
            <person name="Baeumert H.G."/>
            <person name="Rettinger J."/>
            <person name="Eichele A."/>
            <person name="Lambrecht G."/>
            <person name="Mutschler E."/>
            <person name="Schmalzing G."/>
        </authorList>
    </citation>
    <scope>FUNCTION</scope>
    <scope>SUBUNIT</scope>
    <scope>SUBCELLULAR LOCATION</scope>
</reference>
<reference key="5">
    <citation type="journal article" date="1998" name="Mol. Pharmacol.">
        <title>Co-expression of P2X1 and P2X5 receptor subunits reveals a novel ATP-gated ion channel.</title>
        <authorList>
            <person name="Torres G.E."/>
            <person name="Haines W.R."/>
            <person name="Egan T.M."/>
            <person name="Voigt M.M."/>
        </authorList>
    </citation>
    <scope>SUBUNIT</scope>
</reference>
<reference key="6">
    <citation type="journal article" date="2004" name="J. Mol. Biol.">
        <title>Trimeric architecture of homomeric P2X2 and heteromeric P2X1+2 receptor subtypes.</title>
        <authorList>
            <person name="Aschrafi A."/>
            <person name="Sadtler S."/>
            <person name="Niculescu C."/>
            <person name="Rettinger J."/>
            <person name="Schmalzing G."/>
        </authorList>
    </citation>
    <scope>SUBUNIT</scope>
</reference>
<reference key="7">
    <citation type="journal article" date="2005" name="J. Neurochem.">
        <title>Biochemical and functional evidence for heteromeric assembly of P2X1 and P2X4 subunits.</title>
        <authorList>
            <person name="Nicke A."/>
            <person name="Kerschensteiner D."/>
            <person name="Soto F."/>
        </authorList>
    </citation>
    <scope>FUNCTION</scope>
    <scope>SUBUNIT</scope>
</reference>
<keyword id="KW-0053">Apoptosis</keyword>
<keyword id="KW-0067">ATP-binding</keyword>
<keyword id="KW-1003">Cell membrane</keyword>
<keyword id="KW-1015">Disulfide bond</keyword>
<keyword id="KW-0325">Glycoprotein</keyword>
<keyword id="KW-0407">Ion channel</keyword>
<keyword id="KW-0406">Ion transport</keyword>
<keyword id="KW-1071">Ligand-gated ion channel</keyword>
<keyword id="KW-0472">Membrane</keyword>
<keyword id="KW-0547">Nucleotide-binding</keyword>
<keyword id="KW-0597">Phosphoprotein</keyword>
<keyword id="KW-0675">Receptor</keyword>
<keyword id="KW-1185">Reference proteome</keyword>
<keyword id="KW-0812">Transmembrane</keyword>
<keyword id="KW-1133">Transmembrane helix</keyword>
<keyword id="KW-0813">Transport</keyword>